<name>CFA46_HUMAN</name>
<sequence>MDLVITQELARAESQQDAASLKKAYELIKSANLGKSEFDPSESFSPDLFVLCAEQALKMRQPEVSEDCIQMYFKVKAPITQFLGRAHLCRAQMCAPKSAENLEEFENCVTEYMKAINFAKGEPRYYFLVYNASVLYWQMVRPFLKPGYRHHLIPSLSQIINVLSQTEEEDKEWRAELMLELLECYLQAGRKEEAARFCSTAAPFIKSHVPQKYRQIFSVMVRHELMDELQLKEEKKNSISLSVTFYINMLKAKAEQNDLPGDISVILRKAYRHLGHYNHQRFPSISEEKMLLLFELARFSLTLKCMEISSACLSDLKKMESKDPGKLIEMECLECESEALRLESKMKVYNRAAVEAQLDIIQRLDVALQRAVRLGDPRVIHVVCATQWNTCLPLLQHNLRHHLRKPLAGVADVLEKLDSLMTLLRCQVHMEMAQIEEDEDRLEPATEHLRKAARLDSLGLYRDRIQMASTRLRLCTTLYQAPERAEDKAIMAVEQAKKATPKDSVRKKRALLVNAGLALAPDAFQIVLDSENEAKVSTGKNRGRFTYLCAKAWHHTVSVDKAAGHLRRLGNENDKERIQIWAELAKVARKQGVWDVCRTASRFCLLYDNVKVKKLRLRRGKKKRGRDGSVQDTWSQPEVVLQRQVCPDLLRKFAEVGFIHAEATVHLLRSEGVELNDRAIPPEDLSQHPAGYVPEPPEVNAEWITYRTWIESLSRCAMNNWLRSAEIGQEIQEAWIVQNAVVYVLNHNHHLILAGRQKELVDALYHLLSIVKATGHSGDPVMLVTLCNTLARGLIISWIPVQAAEKSRKFMRPNAFHSPLDAGATSEIKTAVEVCEFALNLTNGSAPEETVPTGTRQQLIATWVKAKQLLQQQIGPRLGTEEQGTNEDVSSVTRVLVALEMYSCNGLGLMDFTVPSLAQLVKMASECNWSDPLVELQTLTRLTHFAHAARDHETTMACAHRALEMGIKYLKKFGPEESRLVAEMLCTATAIQGRSIMENLKGRKQLRLVAAKAFTESARFGGIAGSSALVMLAARHYWNAWLPLLSSAVYRKKAKGALKRLIGIINKTEARKQEKGKTLLLHQWPTADFQGGGTTEGYFLPGAEDDLALRAALYGLLFHSHADQDDWEGGLKVLDEAVQVLPRTAHRLLIFKHMVIVKAKLGQNFSMEIQKFKAESEDYLARMWHRLALNSPSVSGELACYNNAIQALQKPEMEWQKVEYLMEFGQWLHHRHFPLEDVVFHLRWAVEILLAMKPPGDVPEPQPTPDGEYVAVEMPPRSPVSEAEEAVSLEQLRSVRQLEALARVHILLALVLSPGAEGYEDCCLAAYAFFRHIWQVSLMTAGKSVLENRPLAATSSHLLLPKKEKENERSKEKEKERSKEKENERSKEKDKEKGKEEKVKEPKQSQSPAPIKQLEDLPMSIEEWASYSCPEEVLSVLKQDRSDSTVNPSSIQKPTYSLYFLDHLVKALQKMCLHELTVPVLQLGVLISDSVVGSKGLSDLYHLRLAHACSELKLREAAARHEEAVGQVCVSELEQASCRKEIALKKEKNKEPLLEESLPALNEQTLPVQPGEIKPLDAKDKILKMNGETGRDLDGTSFPHLWMLKAEVLLEMNLYQPARLLLSEAYLAFQELDEPCAEAQCLLLLAQLANKEKNYGQAKKMIAQAQHLGGSEEFWYNSTLTLAEALLSMEHSGREATVCHIFQKLINAFKILKKERPNRLPLLEFMITDLEARCLSLRVRVAQHSAVTEPTECSLLLKEMDDGLLEIERKFIDCGCKENCVDVKLERAKIKRLRAQNEKDEEQKTAYYLEAYGLAQGAVAEEEGRLHSIQGLYGLAQGAMAEEEGRLHSVQGLLSLQDLQNVNTPLMRKLARLKLGLVEMALDMLQFIWEEAHGQQSEQGSLEKLLADYLQNTSDYTSVGLQWFTLKRTLAHGALAQLGSLQPLSVGCVEIRARLLGLAGRALHLLAMQADPVHPTCYWEAGPSVGAKLSGLKSLELEVEEEGATKSSRDPPASRAAPEEHCRRGEDLKRRMVLAQQYLAQASEVLLQCLQVALGSGLLDVAAAASLEMVECVGTLDPATTCQFLALSQSCSASETMRDVLLAATANTSSSQLAALLQLQHQLRCQDRTTTSLGARVEQRLAAVSKAWQNLCVTEQHFNLLNEMPPTFWILFLHLSGDRSRLYGAAYEKPKFITAAKGKVQAVGGSCKVMRLAISPTAFSHLLACAQQFRKQTQAQVYSEDMALNIGSEPEGLQVEEKERPVQRLSSVLGPLEELLQPLFPLLSLSKARVQTPAVVADSGKSKGKDKERKTSTGQHSTVQPEVADKIVLVADRHLLELPLEGLSVFDEGTISSVSREFSLQMLWNRLHKEETEGGVKKEGRSRDPKKRSLAKKGRKGSIPRTIPPDCIIVDSDNFKFVVDPYEEAQGPEMLTPVSITQDILERFQDTFTSRWAGHLGSKHFPSQAQWEQALGSCSGFFFYGMESFLSHILVERLVAMNLQECQVAVLLDLARSYQSLKRHMESVEHRRSVGRWEANWRNSASPSEDEWRRGGEPRRGFSDLEGQAAAAPKLRAPSHHAQLGPVWAAAPSHRVVQAWTCLPSAAGAPALASALGSAPLPTHPHLPAPIPSSQLALPFLGLSPALGAASARDPPPATSRKAAAWTSSSACLCAPWGLRRGWSCVSSRGQDKGGLPLAALVLSCLDQKTIQTVSLFLI</sequence>
<protein>
    <recommendedName>
        <fullName evidence="9">Cilia- and flagella-associated protein 46</fullName>
    </recommendedName>
    <alternativeName>
        <fullName evidence="10">Tetratricopeptide repeat protein 40</fullName>
    </alternativeName>
</protein>
<proteinExistence type="evidence at protein level"/>
<keyword id="KW-0025">Alternative splicing</keyword>
<keyword id="KW-0966">Cell projection</keyword>
<keyword id="KW-0969">Cilium</keyword>
<keyword id="KW-0970">Cilium biogenesis/degradation</keyword>
<keyword id="KW-0175">Coiled coil</keyword>
<keyword id="KW-0963">Cytoplasm</keyword>
<keyword id="KW-0206">Cytoskeleton</keyword>
<keyword id="KW-1267">Proteomics identification</keyword>
<keyword id="KW-1185">Reference proteome</keyword>
<keyword id="KW-0677">Repeat</keyword>
<keyword id="KW-0802">TPR repeat</keyword>
<evidence type="ECO:0000250" key="1">
    <source>
        <dbReference type="UniProtKB" id="A8ICS9"/>
    </source>
</evidence>
<evidence type="ECO:0000255" key="2"/>
<evidence type="ECO:0000256" key="3">
    <source>
        <dbReference type="SAM" id="MobiDB-lite"/>
    </source>
</evidence>
<evidence type="ECO:0000269" key="4">
    <source>
    </source>
</evidence>
<evidence type="ECO:0000269" key="5">
    <source>
    </source>
</evidence>
<evidence type="ECO:0000269" key="6">
    <source>
    </source>
</evidence>
<evidence type="ECO:0000303" key="7">
    <source>
    </source>
</evidence>
<evidence type="ECO:0000303" key="8">
    <source>
    </source>
</evidence>
<evidence type="ECO:0000305" key="9"/>
<evidence type="ECO:0000312" key="10">
    <source>
        <dbReference type="HGNC" id="HGNC:25247"/>
    </source>
</evidence>
<comment type="function">
    <text evidence="1">As part of the central apparatus of the cilium axoneme plays a role in cilium movement.</text>
</comment>
<comment type="subcellular location">
    <subcellularLocation>
        <location evidence="1">Cytoplasm</location>
        <location evidence="1">Cytoskeleton</location>
        <location evidence="1">Cilium axoneme</location>
    </subcellularLocation>
</comment>
<comment type="alternative products">
    <event type="alternative splicing"/>
    <isoform>
        <id>Q8IYW2-1</id>
        <name>1</name>
        <sequence type="displayed"/>
    </isoform>
    <isoform>
        <id>Q8IYW2-2</id>
        <name>2</name>
        <sequence type="described" ref="VSP_042257 VSP_042258"/>
    </isoform>
    <isoform>
        <id>Q8IYW2-3</id>
        <name>3</name>
        <sequence type="described" ref="VSP_042255 VSP_042256"/>
    </isoform>
</comment>
<comment type="similarity">
    <text evidence="9">Belongs to the CFAP46 family.</text>
</comment>
<comment type="sequence caution" evidence="9">
    <conflict type="erroneous initiation">
        <sequence resource="EMBL-CDS" id="AAH34223"/>
    </conflict>
    <text>Truncated N-terminus.</text>
</comment>
<comment type="sequence caution" evidence="9">
    <conflict type="erroneous termination">
        <sequence resource="EMBL-CDS" id="BAC05424"/>
    </conflict>
    <text>Truncated C-terminus.</text>
</comment>
<gene>
    <name evidence="10" type="primary">CFAP46</name>
    <name evidence="10" type="synonym">C10orf123</name>
    <name evidence="10" type="synonym">C10orf124</name>
    <name evidence="10" type="synonym">C10orf92</name>
    <name evidence="10" type="synonym">C10orf93</name>
    <name evidence="10" type="synonym">TTC40</name>
</gene>
<dbReference type="EMBL" id="AK098820">
    <property type="protein sequence ID" value="BAC05424.1"/>
    <property type="status" value="ALT_SEQ"/>
    <property type="molecule type" value="mRNA"/>
</dbReference>
<dbReference type="EMBL" id="AL392043">
    <property type="status" value="NOT_ANNOTATED_CDS"/>
    <property type="molecule type" value="Genomic_DNA"/>
</dbReference>
<dbReference type="EMBL" id="AL691429">
    <property type="status" value="NOT_ANNOTATED_CDS"/>
    <property type="molecule type" value="Genomic_DNA"/>
</dbReference>
<dbReference type="EMBL" id="BC034223">
    <property type="protein sequence ID" value="AAH34223.1"/>
    <property type="status" value="ALT_INIT"/>
    <property type="molecule type" value="mRNA"/>
</dbReference>
<dbReference type="EMBL" id="BC044661">
    <property type="protein sequence ID" value="AAH44661.1"/>
    <property type="molecule type" value="mRNA"/>
</dbReference>
<dbReference type="EMBL" id="AL122111">
    <property type="protein sequence ID" value="CAB59272.3"/>
    <property type="molecule type" value="mRNA"/>
</dbReference>
<dbReference type="CCDS" id="CCDS58101.1">
    <molecule id="Q8IYW2-1"/>
</dbReference>
<dbReference type="PIR" id="T34538">
    <property type="entry name" value="T34538"/>
</dbReference>
<dbReference type="RefSeq" id="NP_001186978.2">
    <molecule id="Q8IYW2-1"/>
    <property type="nucleotide sequence ID" value="NM_001200049.3"/>
</dbReference>
<dbReference type="SMR" id="Q8IYW2"/>
<dbReference type="BioGRID" id="120145">
    <property type="interactions" value="13"/>
</dbReference>
<dbReference type="FunCoup" id="Q8IYW2">
    <property type="interactions" value="46"/>
</dbReference>
<dbReference type="IntAct" id="Q8IYW2">
    <property type="interactions" value="8"/>
</dbReference>
<dbReference type="STRING" id="9606.ENSP00000357575"/>
<dbReference type="GlyGen" id="Q8IYW2">
    <property type="glycosylation" value="2 sites, 1 O-linked glycan (1 site)"/>
</dbReference>
<dbReference type="iPTMnet" id="Q8IYW2"/>
<dbReference type="PhosphoSitePlus" id="Q8IYW2"/>
<dbReference type="BioMuta" id="CFAP46"/>
<dbReference type="DMDM" id="378405228"/>
<dbReference type="jPOST" id="Q8IYW2"/>
<dbReference type="MassIVE" id="Q8IYW2"/>
<dbReference type="PaxDb" id="9606-ENSP00000357575"/>
<dbReference type="PeptideAtlas" id="Q8IYW2"/>
<dbReference type="ProteomicsDB" id="71249">
    <molecule id="Q8IYW2-1"/>
</dbReference>
<dbReference type="ProteomicsDB" id="71250">
    <molecule id="Q8IYW2-2"/>
</dbReference>
<dbReference type="ProteomicsDB" id="71251">
    <molecule id="Q8IYW2-3"/>
</dbReference>
<dbReference type="Antibodypedia" id="48598">
    <property type="antibodies" value="54 antibodies from 7 providers"/>
</dbReference>
<dbReference type="DNASU" id="255352"/>
<dbReference type="DNASU" id="54777"/>
<dbReference type="Ensembl" id="ENST00000368585.3">
    <molecule id="Q8IYW2-2"/>
    <property type="protein sequence ID" value="ENSP00000357574.3"/>
    <property type="gene ID" value="ENSG00000171811.14"/>
</dbReference>
<dbReference type="Ensembl" id="ENST00000368586.10">
    <molecule id="Q8IYW2-1"/>
    <property type="protein sequence ID" value="ENSP00000357575.4"/>
    <property type="gene ID" value="ENSG00000171811.14"/>
</dbReference>
<dbReference type="GeneID" id="54777"/>
<dbReference type="KEGG" id="hsa:54777"/>
<dbReference type="MANE-Select" id="ENST00000368586.10">
    <property type="protein sequence ID" value="ENSP00000357575.4"/>
    <property type="RefSeq nucleotide sequence ID" value="NM_001200049.3"/>
    <property type="RefSeq protein sequence ID" value="NP_001186978.2"/>
</dbReference>
<dbReference type="UCSC" id="uc001llt.4">
    <molecule id="Q8IYW2-1"/>
    <property type="organism name" value="human"/>
</dbReference>
<dbReference type="AGR" id="HGNC:25247"/>
<dbReference type="CTD" id="54777"/>
<dbReference type="DisGeNET" id="54777"/>
<dbReference type="GeneCards" id="CFAP46"/>
<dbReference type="HGNC" id="HGNC:25247">
    <property type="gene designation" value="CFAP46"/>
</dbReference>
<dbReference type="HPA" id="ENSG00000171811">
    <property type="expression patterns" value="Tissue enhanced (fallopian tube, skeletal muscle, testis)"/>
</dbReference>
<dbReference type="MIM" id="618543">
    <property type="type" value="gene"/>
</dbReference>
<dbReference type="neXtProt" id="NX_Q8IYW2"/>
<dbReference type="OpenTargets" id="ENSG00000171811"/>
<dbReference type="VEuPathDB" id="HostDB:ENSG00000171811"/>
<dbReference type="eggNOG" id="ENOG502QS2Z">
    <property type="taxonomic scope" value="Eukaryota"/>
</dbReference>
<dbReference type="GeneTree" id="ENSGT00570000079216"/>
<dbReference type="HOGENOM" id="CLU_000530_1_0_1"/>
<dbReference type="InParanoid" id="Q8IYW2"/>
<dbReference type="OMA" id="EEFWYNS"/>
<dbReference type="OrthoDB" id="9481409at2759"/>
<dbReference type="PAN-GO" id="Q8IYW2">
    <property type="GO annotations" value="0 GO annotations based on evolutionary models"/>
</dbReference>
<dbReference type="PhylomeDB" id="Q8IYW2"/>
<dbReference type="PathwayCommons" id="Q8IYW2"/>
<dbReference type="SignaLink" id="Q8IYW2"/>
<dbReference type="BioGRID-ORCS" id="54777">
    <property type="hits" value="10 hits in 1141 CRISPR screens"/>
</dbReference>
<dbReference type="ChiTaRS" id="CFAP46">
    <property type="organism name" value="human"/>
</dbReference>
<dbReference type="GenomeRNAi" id="54777"/>
<dbReference type="Pharos" id="Q8IYW2">
    <property type="development level" value="Tdark"/>
</dbReference>
<dbReference type="PRO" id="PR:Q8IYW2"/>
<dbReference type="Proteomes" id="UP000005640">
    <property type="component" value="Chromosome 10"/>
</dbReference>
<dbReference type="RNAct" id="Q8IYW2">
    <property type="molecule type" value="protein"/>
</dbReference>
<dbReference type="Bgee" id="ENSG00000171811">
    <property type="expression patterns" value="Expressed in right uterine tube and 108 other cell types or tissues"/>
</dbReference>
<dbReference type="ExpressionAtlas" id="Q8IYW2">
    <property type="expression patterns" value="baseline and differential"/>
</dbReference>
<dbReference type="GO" id="GO:0005930">
    <property type="term" value="C:axoneme"/>
    <property type="evidence" value="ECO:0000250"/>
    <property type="project" value="UniProtKB"/>
</dbReference>
<dbReference type="GO" id="GO:0035082">
    <property type="term" value="P:axoneme assembly"/>
    <property type="evidence" value="ECO:0000250"/>
    <property type="project" value="UniProtKB"/>
</dbReference>
<dbReference type="GO" id="GO:0060294">
    <property type="term" value="P:cilium movement involved in cell motility"/>
    <property type="evidence" value="ECO:0007669"/>
    <property type="project" value="InterPro"/>
</dbReference>
<dbReference type="InterPro" id="IPR039586">
    <property type="entry name" value="CFAP46"/>
</dbReference>
<dbReference type="PANTHER" id="PTHR15977">
    <property type="entry name" value="CILIA- AND FLAGELLA-ASSOCIATED PROTEIN 46"/>
    <property type="match status" value="1"/>
</dbReference>
<dbReference type="PANTHER" id="PTHR15977:SF15">
    <property type="entry name" value="CILIA- AND FLAGELLA-ASSOCIATED PROTEIN 46"/>
    <property type="match status" value="1"/>
</dbReference>
<dbReference type="Pfam" id="PF03568">
    <property type="entry name" value="Peptidase_C50"/>
    <property type="match status" value="1"/>
</dbReference>
<dbReference type="Pfam" id="PF25439">
    <property type="entry name" value="TPR_CFAP46_N"/>
    <property type="match status" value="1"/>
</dbReference>
<accession>Q8IYW2</accession>
<accession>B1AP44</accession>
<accession>B7WPK8</accession>
<accession>Q5JSF7</accession>
<accession>Q5SR76</accession>
<accession>Q5SR77</accession>
<accession>Q86ST2</accession>
<accession>Q8N777</accession>
<accession>Q9NTQ5</accession>
<feature type="chain" id="PRO_0000089812" description="Cilia- and flagella-associated protein 46">
    <location>
        <begin position="1"/>
        <end position="2715"/>
    </location>
</feature>
<feature type="repeat" description="TPR 1">
    <location>
        <begin position="89"/>
        <end position="122"/>
    </location>
</feature>
<feature type="repeat" description="TPR 2">
    <location>
        <begin position="175"/>
        <end position="208"/>
    </location>
</feature>
<feature type="repeat" description="TPR 3">
    <location>
        <begin position="261"/>
        <end position="295"/>
    </location>
</feature>
<feature type="repeat" description="TPR 4">
    <location>
        <begin position="324"/>
        <end position="359"/>
    </location>
</feature>
<feature type="repeat" description="TPR 5">
    <location>
        <begin position="426"/>
        <end position="459"/>
    </location>
</feature>
<feature type="repeat" description="TPR 6">
    <location>
        <begin position="469"/>
        <end position="503"/>
    </location>
</feature>
<feature type="repeat" description="TPR 7">
    <location>
        <begin position="807"/>
        <end position="845"/>
    </location>
</feature>
<feature type="repeat" description="TPR 8">
    <location>
        <begin position="936"/>
        <end position="969"/>
    </location>
</feature>
<feature type="repeat" description="TPR 9">
    <location>
        <begin position="1111"/>
        <end position="1144"/>
    </location>
</feature>
<feature type="repeat" description="TPR 10">
    <location>
        <begin position="1174"/>
        <end position="1211"/>
    </location>
</feature>
<feature type="repeat" description="TPR 11">
    <location>
        <begin position="1639"/>
        <end position="1672"/>
    </location>
</feature>
<feature type="repeat" description="TPR 12">
    <location>
        <begin position="2399"/>
        <end position="2432"/>
    </location>
</feature>
<feature type="repeat" description="TPR 13">
    <location>
        <begin position="2504"/>
        <end position="2537"/>
    </location>
</feature>
<feature type="region of interest" description="Disordered" evidence="3">
    <location>
        <begin position="1356"/>
        <end position="1412"/>
    </location>
</feature>
<feature type="region of interest" description="Disordered" evidence="3">
    <location>
        <begin position="2000"/>
        <end position="2023"/>
    </location>
</feature>
<feature type="region of interest" description="Disordered" evidence="3">
    <location>
        <begin position="2294"/>
        <end position="2319"/>
    </location>
</feature>
<feature type="region of interest" description="Disordered" evidence="3">
    <location>
        <begin position="2371"/>
        <end position="2399"/>
    </location>
</feature>
<feature type="region of interest" description="Disordered" evidence="3">
    <location>
        <begin position="2541"/>
        <end position="2567"/>
    </location>
</feature>
<feature type="coiled-coil region" evidence="2">
    <location>
        <begin position="1362"/>
        <end position="1401"/>
    </location>
</feature>
<feature type="coiled-coil region" evidence="2">
    <location>
        <begin position="1781"/>
        <end position="1810"/>
    </location>
</feature>
<feature type="compositionally biased region" description="Basic and acidic residues" evidence="3">
    <location>
        <begin position="1361"/>
        <end position="1403"/>
    </location>
</feature>
<feature type="compositionally biased region" description="Basic and acidic residues" evidence="3">
    <location>
        <begin position="2300"/>
        <end position="2311"/>
    </location>
</feature>
<feature type="compositionally biased region" description="Basic and acidic residues" evidence="3">
    <location>
        <begin position="2371"/>
        <end position="2383"/>
    </location>
</feature>
<feature type="compositionally biased region" description="Basic residues" evidence="3">
    <location>
        <begin position="2384"/>
        <end position="2398"/>
    </location>
</feature>
<feature type="compositionally biased region" description="Basic and acidic residues" evidence="3">
    <location>
        <begin position="2546"/>
        <end position="2559"/>
    </location>
</feature>
<feature type="splice variant" id="VSP_042255" description="In isoform 3." evidence="8">
    <original>RHELMDELQLKEEKKNSISLSVTFYI</original>
    <variation>NQRIRNRDVRSNFLKSHCSENCVEIT</variation>
    <location>
        <begin position="222"/>
        <end position="247"/>
    </location>
</feature>
<feature type="splice variant" id="VSP_042256" description="In isoform 3." evidence="8">
    <location>
        <begin position="248"/>
        <end position="2715"/>
    </location>
</feature>
<feature type="splice variant" id="VSP_042257" description="In isoform 2." evidence="7">
    <original>DPGKLIEMECLECESEALRLESKMKVYNRAAVEAQLDIIQRLDVALQRAVRLGDPRVIHVVCATQWNTCLPLLQHNLRHHLRK</original>
    <variation>VSGFMTLLPGDEALLTVQLDKRQRKEEQFTRPRPPGLRSVVGTLPSFLPVFCTVAVRWCLQFYTCPFLFTFLVATGPQHHSCF</variation>
    <location>
        <begin position="323"/>
        <end position="405"/>
    </location>
</feature>
<feature type="splice variant" id="VSP_042258" description="In isoform 2." evidence="7">
    <location>
        <begin position="406"/>
        <end position="2715"/>
    </location>
</feature>
<feature type="sequence variant" id="VAR_046201" description="In dbSNP:rs12781609." evidence="5">
    <original>S</original>
    <variation>N</variation>
    <location>
        <position position="264"/>
    </location>
</feature>
<feature type="sequence variant" id="VAR_056823" description="In dbSNP:rs10870341.">
    <original>C</original>
    <variation>R</variation>
    <location>
        <position position="2125"/>
    </location>
</feature>
<feature type="sequence variant" id="VAR_056824" description="In dbSNP:rs12356978.">
    <original>E</original>
    <variation>K</variation>
    <location>
        <position position="2249"/>
    </location>
</feature>
<feature type="sequence variant" id="VAR_023208" description="In dbSNP:rs4880433." evidence="4 6">
    <original>A</original>
    <variation>T</variation>
    <location>
        <position position="2331"/>
    </location>
</feature>
<feature type="sequence variant" id="VAR_056825" description="In dbSNP:rs3750587.">
    <original>L</original>
    <variation>F</variation>
    <location>
        <position position="2499"/>
    </location>
</feature>
<feature type="sequence variant" id="VAR_023209" description="In dbSNP:rs2254419." evidence="4 6">
    <original>S</original>
    <variation>G</variation>
    <location>
        <position position="2540"/>
    </location>
</feature>
<feature type="sequence variant" id="VAR_056826" description="In dbSNP:rs35981039.">
    <original>K</original>
    <variation>Q</variation>
    <location>
        <position position="2658"/>
    </location>
</feature>
<reference key="1">
    <citation type="journal article" date="2004" name="Nat. Genet.">
        <title>Complete sequencing and characterization of 21,243 full-length human cDNAs.</title>
        <authorList>
            <person name="Ota T."/>
            <person name="Suzuki Y."/>
            <person name="Nishikawa T."/>
            <person name="Otsuki T."/>
            <person name="Sugiyama T."/>
            <person name="Irie R."/>
            <person name="Wakamatsu A."/>
            <person name="Hayashi K."/>
            <person name="Sato H."/>
            <person name="Nagai K."/>
            <person name="Kimura K."/>
            <person name="Makita H."/>
            <person name="Sekine M."/>
            <person name="Obayashi M."/>
            <person name="Nishi T."/>
            <person name="Shibahara T."/>
            <person name="Tanaka T."/>
            <person name="Ishii S."/>
            <person name="Yamamoto J."/>
            <person name="Saito K."/>
            <person name="Kawai Y."/>
            <person name="Isono Y."/>
            <person name="Nakamura Y."/>
            <person name="Nagahari K."/>
            <person name="Murakami K."/>
            <person name="Yasuda T."/>
            <person name="Iwayanagi T."/>
            <person name="Wagatsuma M."/>
            <person name="Shiratori A."/>
            <person name="Sudo H."/>
            <person name="Hosoiri T."/>
            <person name="Kaku Y."/>
            <person name="Kodaira H."/>
            <person name="Kondo H."/>
            <person name="Sugawara M."/>
            <person name="Takahashi M."/>
            <person name="Kanda K."/>
            <person name="Yokoi T."/>
            <person name="Furuya T."/>
            <person name="Kikkawa E."/>
            <person name="Omura Y."/>
            <person name="Abe K."/>
            <person name="Kamihara K."/>
            <person name="Katsuta N."/>
            <person name="Sato K."/>
            <person name="Tanikawa M."/>
            <person name="Yamazaki M."/>
            <person name="Ninomiya K."/>
            <person name="Ishibashi T."/>
            <person name="Yamashita H."/>
            <person name="Murakawa K."/>
            <person name="Fujimori K."/>
            <person name="Tanai H."/>
            <person name="Kimata M."/>
            <person name="Watanabe M."/>
            <person name="Hiraoka S."/>
            <person name="Chiba Y."/>
            <person name="Ishida S."/>
            <person name="Ono Y."/>
            <person name="Takiguchi S."/>
            <person name="Watanabe S."/>
            <person name="Yosida M."/>
            <person name="Hotuta T."/>
            <person name="Kusano J."/>
            <person name="Kanehori K."/>
            <person name="Takahashi-Fujii A."/>
            <person name="Hara H."/>
            <person name="Tanase T.-O."/>
            <person name="Nomura Y."/>
            <person name="Togiya S."/>
            <person name="Komai F."/>
            <person name="Hara R."/>
            <person name="Takeuchi K."/>
            <person name="Arita M."/>
            <person name="Imose N."/>
            <person name="Musashino K."/>
            <person name="Yuuki H."/>
            <person name="Oshima A."/>
            <person name="Sasaki N."/>
            <person name="Aotsuka S."/>
            <person name="Yoshikawa Y."/>
            <person name="Matsunawa H."/>
            <person name="Ichihara T."/>
            <person name="Shiohata N."/>
            <person name="Sano S."/>
            <person name="Moriya S."/>
            <person name="Momiyama H."/>
            <person name="Satoh N."/>
            <person name="Takami S."/>
            <person name="Terashima Y."/>
            <person name="Suzuki O."/>
            <person name="Nakagawa S."/>
            <person name="Senoh A."/>
            <person name="Mizoguchi H."/>
            <person name="Goto Y."/>
            <person name="Shimizu F."/>
            <person name="Wakebe H."/>
            <person name="Hishigaki H."/>
            <person name="Watanabe T."/>
            <person name="Sugiyama A."/>
            <person name="Takemoto M."/>
            <person name="Kawakami B."/>
            <person name="Yamazaki M."/>
            <person name="Watanabe K."/>
            <person name="Kumagai A."/>
            <person name="Itakura S."/>
            <person name="Fukuzumi Y."/>
            <person name="Fujimori Y."/>
            <person name="Komiyama M."/>
            <person name="Tashiro H."/>
            <person name="Tanigami A."/>
            <person name="Fujiwara T."/>
            <person name="Ono T."/>
            <person name="Yamada K."/>
            <person name="Fujii Y."/>
            <person name="Ozaki K."/>
            <person name="Hirao M."/>
            <person name="Ohmori Y."/>
            <person name="Kawabata A."/>
            <person name="Hikiji T."/>
            <person name="Kobatake N."/>
            <person name="Inagaki H."/>
            <person name="Ikema Y."/>
            <person name="Okamoto S."/>
            <person name="Okitani R."/>
            <person name="Kawakami T."/>
            <person name="Noguchi S."/>
            <person name="Itoh T."/>
            <person name="Shigeta K."/>
            <person name="Senba T."/>
            <person name="Matsumura K."/>
            <person name="Nakajima Y."/>
            <person name="Mizuno T."/>
            <person name="Morinaga M."/>
            <person name="Sasaki M."/>
            <person name="Togashi T."/>
            <person name="Oyama M."/>
            <person name="Hata H."/>
            <person name="Watanabe M."/>
            <person name="Komatsu T."/>
            <person name="Mizushima-Sugano J."/>
            <person name="Satoh T."/>
            <person name="Shirai Y."/>
            <person name="Takahashi Y."/>
            <person name="Nakagawa K."/>
            <person name="Okumura K."/>
            <person name="Nagase T."/>
            <person name="Nomura N."/>
            <person name="Kikuchi H."/>
            <person name="Masuho Y."/>
            <person name="Yamashita R."/>
            <person name="Nakai K."/>
            <person name="Yada T."/>
            <person name="Nakamura Y."/>
            <person name="Ohara O."/>
            <person name="Isogai T."/>
            <person name="Sugano S."/>
        </authorList>
    </citation>
    <scope>NUCLEOTIDE SEQUENCE [LARGE SCALE MRNA] (ISOFORM 2)</scope>
    <scope>VARIANT ASN-264</scope>
    <source>
        <tissue>Testis</tissue>
    </source>
</reference>
<reference key="2">
    <citation type="journal article" date="2004" name="Nature">
        <title>The DNA sequence and comparative analysis of human chromosome 10.</title>
        <authorList>
            <person name="Deloukas P."/>
            <person name="Earthrowl M.E."/>
            <person name="Grafham D.V."/>
            <person name="Rubenfield M."/>
            <person name="French L."/>
            <person name="Steward C.A."/>
            <person name="Sims S.K."/>
            <person name="Jones M.C."/>
            <person name="Searle S."/>
            <person name="Scott C."/>
            <person name="Howe K."/>
            <person name="Hunt S.E."/>
            <person name="Andrews T.D."/>
            <person name="Gilbert J.G.R."/>
            <person name="Swarbreck D."/>
            <person name="Ashurst J.L."/>
            <person name="Taylor A."/>
            <person name="Battles J."/>
            <person name="Bird C.P."/>
            <person name="Ainscough R."/>
            <person name="Almeida J.P."/>
            <person name="Ashwell R.I.S."/>
            <person name="Ambrose K.D."/>
            <person name="Babbage A.K."/>
            <person name="Bagguley C.L."/>
            <person name="Bailey J."/>
            <person name="Banerjee R."/>
            <person name="Bates K."/>
            <person name="Beasley H."/>
            <person name="Bray-Allen S."/>
            <person name="Brown A.J."/>
            <person name="Brown J.Y."/>
            <person name="Burford D.C."/>
            <person name="Burrill W."/>
            <person name="Burton J."/>
            <person name="Cahill P."/>
            <person name="Camire D."/>
            <person name="Carter N.P."/>
            <person name="Chapman J.C."/>
            <person name="Clark S.Y."/>
            <person name="Clarke G."/>
            <person name="Clee C.M."/>
            <person name="Clegg S."/>
            <person name="Corby N."/>
            <person name="Coulson A."/>
            <person name="Dhami P."/>
            <person name="Dutta I."/>
            <person name="Dunn M."/>
            <person name="Faulkner L."/>
            <person name="Frankish A."/>
            <person name="Frankland J.A."/>
            <person name="Garner P."/>
            <person name="Garnett J."/>
            <person name="Gribble S."/>
            <person name="Griffiths C."/>
            <person name="Grocock R."/>
            <person name="Gustafson E."/>
            <person name="Hammond S."/>
            <person name="Harley J.L."/>
            <person name="Hart E."/>
            <person name="Heath P.D."/>
            <person name="Ho T.P."/>
            <person name="Hopkins B."/>
            <person name="Horne J."/>
            <person name="Howden P.J."/>
            <person name="Huckle E."/>
            <person name="Hynds C."/>
            <person name="Johnson C."/>
            <person name="Johnson D."/>
            <person name="Kana A."/>
            <person name="Kay M."/>
            <person name="Kimberley A.M."/>
            <person name="Kershaw J.K."/>
            <person name="Kokkinaki M."/>
            <person name="Laird G.K."/>
            <person name="Lawlor S."/>
            <person name="Lee H.M."/>
            <person name="Leongamornlert D.A."/>
            <person name="Laird G."/>
            <person name="Lloyd C."/>
            <person name="Lloyd D.M."/>
            <person name="Loveland J."/>
            <person name="Lovell J."/>
            <person name="McLaren S."/>
            <person name="McLay K.E."/>
            <person name="McMurray A."/>
            <person name="Mashreghi-Mohammadi M."/>
            <person name="Matthews L."/>
            <person name="Milne S."/>
            <person name="Nickerson T."/>
            <person name="Nguyen M."/>
            <person name="Overton-Larty E."/>
            <person name="Palmer S.A."/>
            <person name="Pearce A.V."/>
            <person name="Peck A.I."/>
            <person name="Pelan S."/>
            <person name="Phillimore B."/>
            <person name="Porter K."/>
            <person name="Rice C.M."/>
            <person name="Rogosin A."/>
            <person name="Ross M.T."/>
            <person name="Sarafidou T."/>
            <person name="Sehra H.K."/>
            <person name="Shownkeen R."/>
            <person name="Skuce C.D."/>
            <person name="Smith M."/>
            <person name="Standring L."/>
            <person name="Sycamore N."/>
            <person name="Tester J."/>
            <person name="Thorpe A."/>
            <person name="Torcasso W."/>
            <person name="Tracey A."/>
            <person name="Tromans A."/>
            <person name="Tsolas J."/>
            <person name="Wall M."/>
            <person name="Walsh J."/>
            <person name="Wang H."/>
            <person name="Weinstock K."/>
            <person name="West A.P."/>
            <person name="Willey D.L."/>
            <person name="Whitehead S.L."/>
            <person name="Wilming L."/>
            <person name="Wray P.W."/>
            <person name="Young L."/>
            <person name="Chen Y."/>
            <person name="Lovering R.C."/>
            <person name="Moschonas N.K."/>
            <person name="Siebert R."/>
            <person name="Fechtel K."/>
            <person name="Bentley D."/>
            <person name="Durbin R.M."/>
            <person name="Hubbard T."/>
            <person name="Doucette-Stamm L."/>
            <person name="Beck S."/>
            <person name="Smith D.R."/>
            <person name="Rogers J."/>
        </authorList>
    </citation>
    <scope>NUCLEOTIDE SEQUENCE [LARGE SCALE GENOMIC DNA]</scope>
</reference>
<reference key="3">
    <citation type="journal article" date="2004" name="Genome Res.">
        <title>The status, quality, and expansion of the NIH full-length cDNA project: the Mammalian Gene Collection (MGC).</title>
        <authorList>
            <consortium name="The MGC Project Team"/>
        </authorList>
    </citation>
    <scope>NUCLEOTIDE SEQUENCE [LARGE SCALE MRNA] (ISOFORM 3)</scope>
    <scope>NUCLEOTIDE SEQUENCE [LARGE SCALE MRNA] OF 1812-2715 (ISOFORM 1)</scope>
    <scope>VARIANTS THR-2331 AND GLY-2540</scope>
    <source>
        <tissue>Testis</tissue>
    </source>
</reference>
<reference key="4">
    <citation type="journal article" date="2001" name="Genome Res.">
        <title>Towards a catalog of human genes and proteins: sequencing and analysis of 500 novel complete protein coding human cDNAs.</title>
        <authorList>
            <person name="Wiemann S."/>
            <person name="Weil B."/>
            <person name="Wellenreuther R."/>
            <person name="Gassenhuber J."/>
            <person name="Glassl S."/>
            <person name="Ansorge W."/>
            <person name="Boecher M."/>
            <person name="Bloecker H."/>
            <person name="Bauersachs S."/>
            <person name="Blum H."/>
            <person name="Lauber J."/>
            <person name="Duesterhoeft A."/>
            <person name="Beyer A."/>
            <person name="Koehrer K."/>
            <person name="Strack N."/>
            <person name="Mewes H.-W."/>
            <person name="Ottenwaelder B."/>
            <person name="Obermaier B."/>
            <person name="Tampe J."/>
            <person name="Heubner D."/>
            <person name="Wambutt R."/>
            <person name="Korn B."/>
            <person name="Klein M."/>
            <person name="Poustka A."/>
        </authorList>
    </citation>
    <scope>NUCLEOTIDE SEQUENCE [LARGE SCALE MRNA] OF 2134-2715 (ISOFORM 1)</scope>
    <scope>VARIANTS THR-2331 AND GLY-2540</scope>
    <source>
        <tissue>Testis</tissue>
    </source>
</reference>
<organism>
    <name type="scientific">Homo sapiens</name>
    <name type="common">Human</name>
    <dbReference type="NCBI Taxonomy" id="9606"/>
    <lineage>
        <taxon>Eukaryota</taxon>
        <taxon>Metazoa</taxon>
        <taxon>Chordata</taxon>
        <taxon>Craniata</taxon>
        <taxon>Vertebrata</taxon>
        <taxon>Euteleostomi</taxon>
        <taxon>Mammalia</taxon>
        <taxon>Eutheria</taxon>
        <taxon>Euarchontoglires</taxon>
        <taxon>Primates</taxon>
        <taxon>Haplorrhini</taxon>
        <taxon>Catarrhini</taxon>
        <taxon>Hominidae</taxon>
        <taxon>Homo</taxon>
    </lineage>
</organism>